<proteinExistence type="evidence at protein level"/>
<comment type="function">
    <text evidence="4">Regulatory subunit which plays a role in the allosteric regulation of the enzyme catalyzing the decarboxylation of isocitrate (ICT) into alpha-ketoglutarate. The heterodimer composed of the alpha (IDH3A) and beta (IDH3B) subunits and the heterodimer composed of the alpha (IDH3A) and gamma (IDH3G) subunits, have considerable basal activity but the full activity of the heterotetramer (containing two subunits of IDH3A, one of IDH3B and one of IDH3G) requires the assembly and cooperative function of both heterodimers.</text>
</comment>
<comment type="cofactor">
    <cofactor evidence="3 4">
        <name>Mg(2+)</name>
        <dbReference type="ChEBI" id="CHEBI:18420"/>
    </cofactor>
    <cofactor evidence="4">
        <name>Mn(2+)</name>
        <dbReference type="ChEBI" id="CHEBI:29035"/>
    </cofactor>
    <text evidence="4">Divalent metal cations; Mn(2+) or Mg(2+). Activity higher in presence of Mn(2+) than of Mg(2+). Binds 1 Mg(2+) or Mn(2+) ion per subunit.</text>
</comment>
<comment type="activity regulation">
    <text evidence="3 4">The heterotetramer and the heterodimer composed of IDH3A and IDH3G subunits can be allosterically activated by citrate (CIT) or/and ADP, and the two activators can act independently or synergistically. The heterodimer composed of IDH3A and IDH3B subunits cannot be allosterically regulated and the allosteric regulation of the heterotetramer is through the IDH3G subunit and not the IDH3B subunit. The IDH3G subunit contains the allosteric site which consists of a CIT-binding site and an ADP-binding site, and the binding of CIT and ADP causes conformational changes at the allosteric site which are transmitted to the active site in the catalytic subunit (IDH3A) through a cascade of conformational changes at the heterodimer interface, leading to stabilization of the isocitrate-binding at the active site and thus activation of the enzyme. ATP can activate the heterotetramer and the heterodimer composed of IDH3A and IDH3G subunits at low concentrations but inhibits their activities at high concentrations, whereas ATP exhibits only inhibitory effect on the heterodimer composed of IDH3A and IDH3B subunits.</text>
</comment>
<comment type="subunit">
    <text evidence="3 4">Heterooligomer of subunits alpha (IDH3A), beta (IDH3B), and gamma (IDH3G) in the apparent ratio of 2:1:1. The heterodimer containing one IDH3A and one IDH3B subunit and the heterodimer containing one IDH3A and one IDH3G subunit assemble into a heterotetramer (which contains two subunits of IDH3A, one of IDH3B and one of IDH3G) and further into the heterooctamer.</text>
</comment>
<comment type="interaction">
    <interactant intactId="EBI-1210876">
        <id>P51553</id>
    </interactant>
    <interactant intactId="EBI-352528">
        <id>P10809</id>
        <label>HSPD1</label>
    </interactant>
    <organismsDiffer>false</organismsDiffer>
    <experiments>3</experiments>
</comment>
<comment type="interaction">
    <interactant intactId="EBI-1210876">
        <id>P51553</id>
    </interactant>
    <interactant intactId="EBI-355999">
        <id>P50213</id>
        <label>IDH3A</label>
    </interactant>
    <organismsDiffer>false</organismsDiffer>
    <experiments>6</experiments>
</comment>
<comment type="subcellular location">
    <subcellularLocation>
        <location evidence="2">Mitochondrion</location>
    </subcellularLocation>
</comment>
<comment type="alternative products">
    <event type="alternative splicing"/>
    <isoform>
        <id>P51553-1</id>
        <name>1</name>
        <sequence type="displayed"/>
    </isoform>
    <isoform>
        <id>P51553-2</id>
        <name>2</name>
        <sequence type="described" ref="VSP_046771"/>
    </isoform>
</comment>
<comment type="similarity">
    <text evidence="5">Belongs to the isocitrate and isopropylmalate dehydrogenases family.</text>
</comment>
<organism>
    <name type="scientific">Homo sapiens</name>
    <name type="common">Human</name>
    <dbReference type="NCBI Taxonomy" id="9606"/>
    <lineage>
        <taxon>Eukaryota</taxon>
        <taxon>Metazoa</taxon>
        <taxon>Chordata</taxon>
        <taxon>Craniata</taxon>
        <taxon>Vertebrata</taxon>
        <taxon>Euteleostomi</taxon>
        <taxon>Mammalia</taxon>
        <taxon>Eutheria</taxon>
        <taxon>Euarchontoglires</taxon>
        <taxon>Primates</taxon>
        <taxon>Haplorrhini</taxon>
        <taxon>Catarrhini</taxon>
        <taxon>Hominidae</taxon>
        <taxon>Homo</taxon>
    </lineage>
</organism>
<keyword id="KW-0002">3D-structure</keyword>
<keyword id="KW-0025">Alternative splicing</keyword>
<keyword id="KW-0067">ATP-binding</keyword>
<keyword id="KW-0460">Magnesium</keyword>
<keyword id="KW-0464">Manganese</keyword>
<keyword id="KW-0479">Metal-binding</keyword>
<keyword id="KW-0496">Mitochondrion</keyword>
<keyword id="KW-0547">Nucleotide-binding</keyword>
<keyword id="KW-1267">Proteomics identification</keyword>
<keyword id="KW-1185">Reference proteome</keyword>
<keyword id="KW-0809">Transit peptide</keyword>
<keyword id="KW-0816">Tricarboxylic acid cycle</keyword>
<evidence type="ECO:0000250" key="1"/>
<evidence type="ECO:0000269" key="2">
    <source>
    </source>
</evidence>
<evidence type="ECO:0000269" key="3">
    <source>
    </source>
</evidence>
<evidence type="ECO:0000269" key="4">
    <source>
    </source>
</evidence>
<evidence type="ECO:0000305" key="5"/>
<evidence type="ECO:0007829" key="6">
    <source>
        <dbReference type="PDB" id="5GRH"/>
    </source>
</evidence>
<evidence type="ECO:0007829" key="7">
    <source>
        <dbReference type="PDB" id="6L57"/>
    </source>
</evidence>
<evidence type="ECO:0007829" key="8">
    <source>
        <dbReference type="PDB" id="6L59"/>
    </source>
</evidence>
<evidence type="ECO:0007829" key="9">
    <source>
        <dbReference type="PDB" id="8GRG"/>
    </source>
</evidence>
<evidence type="ECO:0007829" key="10">
    <source>
        <dbReference type="PDB" id="8GRH"/>
    </source>
</evidence>
<reference key="1">
    <citation type="journal article" date="1997" name="Genomics">
        <title>Genomic organization of two novel genes on human Xq28: compact head to head arrangement of IDH gamma and TRAP delta is conserved in rat and mouse.</title>
        <authorList>
            <person name="Brenner V."/>
            <person name="Nyakatura G."/>
            <person name="Rosenthal A."/>
            <person name="Platzer M."/>
        </authorList>
    </citation>
    <scope>NUCLEOTIDE SEQUENCE [GENOMIC DNA / MRNA] (ISOFORM 1)</scope>
    <source>
        <tissue>Brain</tissue>
    </source>
</reference>
<reference key="2">
    <citation type="journal article" date="1999" name="J. Biol. Chem.">
        <title>Identification and functional characterization of a novel, tissue-specific NAD+-dependent isocitrate dehydrogenase beta subunit isoform.</title>
        <authorList>
            <person name="Kim Y.-O."/>
            <person name="Koh H.-J."/>
            <person name="Kim S.-H."/>
            <person name="Jo S.-H."/>
            <person name="Huh J.-W."/>
            <person name="Jeong K.-S."/>
            <person name="Lee I.J."/>
            <person name="Song B.J."/>
            <person name="Huh T.-L."/>
        </authorList>
    </citation>
    <scope>NUCLEOTIDE SEQUENCE [MRNA] (ISOFORM 1)</scope>
    <source>
        <tissue>Heart</tissue>
    </source>
</reference>
<reference key="3">
    <citation type="journal article" date="2005" name="Nature">
        <title>The DNA sequence of the human X chromosome.</title>
        <authorList>
            <person name="Ross M.T."/>
            <person name="Grafham D.V."/>
            <person name="Coffey A.J."/>
            <person name="Scherer S."/>
            <person name="McLay K."/>
            <person name="Muzny D."/>
            <person name="Platzer M."/>
            <person name="Howell G.R."/>
            <person name="Burrows C."/>
            <person name="Bird C.P."/>
            <person name="Frankish A."/>
            <person name="Lovell F.L."/>
            <person name="Howe K.L."/>
            <person name="Ashurst J.L."/>
            <person name="Fulton R.S."/>
            <person name="Sudbrak R."/>
            <person name="Wen G."/>
            <person name="Jones M.C."/>
            <person name="Hurles M.E."/>
            <person name="Andrews T.D."/>
            <person name="Scott C.E."/>
            <person name="Searle S."/>
            <person name="Ramser J."/>
            <person name="Whittaker A."/>
            <person name="Deadman R."/>
            <person name="Carter N.P."/>
            <person name="Hunt S.E."/>
            <person name="Chen R."/>
            <person name="Cree A."/>
            <person name="Gunaratne P."/>
            <person name="Havlak P."/>
            <person name="Hodgson A."/>
            <person name="Metzker M.L."/>
            <person name="Richards S."/>
            <person name="Scott G."/>
            <person name="Steffen D."/>
            <person name="Sodergren E."/>
            <person name="Wheeler D.A."/>
            <person name="Worley K.C."/>
            <person name="Ainscough R."/>
            <person name="Ambrose K.D."/>
            <person name="Ansari-Lari M.A."/>
            <person name="Aradhya S."/>
            <person name="Ashwell R.I."/>
            <person name="Babbage A.K."/>
            <person name="Bagguley C.L."/>
            <person name="Ballabio A."/>
            <person name="Banerjee R."/>
            <person name="Barker G.E."/>
            <person name="Barlow K.F."/>
            <person name="Barrett I.P."/>
            <person name="Bates K.N."/>
            <person name="Beare D.M."/>
            <person name="Beasley H."/>
            <person name="Beasley O."/>
            <person name="Beck A."/>
            <person name="Bethel G."/>
            <person name="Blechschmidt K."/>
            <person name="Brady N."/>
            <person name="Bray-Allen S."/>
            <person name="Bridgeman A.M."/>
            <person name="Brown A.J."/>
            <person name="Brown M.J."/>
            <person name="Bonnin D."/>
            <person name="Bruford E.A."/>
            <person name="Buhay C."/>
            <person name="Burch P."/>
            <person name="Burford D."/>
            <person name="Burgess J."/>
            <person name="Burrill W."/>
            <person name="Burton J."/>
            <person name="Bye J.M."/>
            <person name="Carder C."/>
            <person name="Carrel L."/>
            <person name="Chako J."/>
            <person name="Chapman J.C."/>
            <person name="Chavez D."/>
            <person name="Chen E."/>
            <person name="Chen G."/>
            <person name="Chen Y."/>
            <person name="Chen Z."/>
            <person name="Chinault C."/>
            <person name="Ciccodicola A."/>
            <person name="Clark S.Y."/>
            <person name="Clarke G."/>
            <person name="Clee C.M."/>
            <person name="Clegg S."/>
            <person name="Clerc-Blankenburg K."/>
            <person name="Clifford K."/>
            <person name="Cobley V."/>
            <person name="Cole C.G."/>
            <person name="Conquer J.S."/>
            <person name="Corby N."/>
            <person name="Connor R.E."/>
            <person name="David R."/>
            <person name="Davies J."/>
            <person name="Davis C."/>
            <person name="Davis J."/>
            <person name="Delgado O."/>
            <person name="Deshazo D."/>
            <person name="Dhami P."/>
            <person name="Ding Y."/>
            <person name="Dinh H."/>
            <person name="Dodsworth S."/>
            <person name="Draper H."/>
            <person name="Dugan-Rocha S."/>
            <person name="Dunham A."/>
            <person name="Dunn M."/>
            <person name="Durbin K.J."/>
            <person name="Dutta I."/>
            <person name="Eades T."/>
            <person name="Ellwood M."/>
            <person name="Emery-Cohen A."/>
            <person name="Errington H."/>
            <person name="Evans K.L."/>
            <person name="Faulkner L."/>
            <person name="Francis F."/>
            <person name="Frankland J."/>
            <person name="Fraser A.E."/>
            <person name="Galgoczy P."/>
            <person name="Gilbert J."/>
            <person name="Gill R."/>
            <person name="Gloeckner G."/>
            <person name="Gregory S.G."/>
            <person name="Gribble S."/>
            <person name="Griffiths C."/>
            <person name="Grocock R."/>
            <person name="Gu Y."/>
            <person name="Gwilliam R."/>
            <person name="Hamilton C."/>
            <person name="Hart E.A."/>
            <person name="Hawes A."/>
            <person name="Heath P.D."/>
            <person name="Heitmann K."/>
            <person name="Hennig S."/>
            <person name="Hernandez J."/>
            <person name="Hinzmann B."/>
            <person name="Ho S."/>
            <person name="Hoffs M."/>
            <person name="Howden P.J."/>
            <person name="Huckle E.J."/>
            <person name="Hume J."/>
            <person name="Hunt P.J."/>
            <person name="Hunt A.R."/>
            <person name="Isherwood J."/>
            <person name="Jacob L."/>
            <person name="Johnson D."/>
            <person name="Jones S."/>
            <person name="de Jong P.J."/>
            <person name="Joseph S.S."/>
            <person name="Keenan S."/>
            <person name="Kelly S."/>
            <person name="Kershaw J.K."/>
            <person name="Khan Z."/>
            <person name="Kioschis P."/>
            <person name="Klages S."/>
            <person name="Knights A.J."/>
            <person name="Kosiura A."/>
            <person name="Kovar-Smith C."/>
            <person name="Laird G.K."/>
            <person name="Langford C."/>
            <person name="Lawlor S."/>
            <person name="Leversha M."/>
            <person name="Lewis L."/>
            <person name="Liu W."/>
            <person name="Lloyd C."/>
            <person name="Lloyd D.M."/>
            <person name="Loulseged H."/>
            <person name="Loveland J.E."/>
            <person name="Lovell J.D."/>
            <person name="Lozado R."/>
            <person name="Lu J."/>
            <person name="Lyne R."/>
            <person name="Ma J."/>
            <person name="Maheshwari M."/>
            <person name="Matthews L.H."/>
            <person name="McDowall J."/>
            <person name="McLaren S."/>
            <person name="McMurray A."/>
            <person name="Meidl P."/>
            <person name="Meitinger T."/>
            <person name="Milne S."/>
            <person name="Miner G."/>
            <person name="Mistry S.L."/>
            <person name="Morgan M."/>
            <person name="Morris S."/>
            <person name="Mueller I."/>
            <person name="Mullikin J.C."/>
            <person name="Nguyen N."/>
            <person name="Nordsiek G."/>
            <person name="Nyakatura G."/>
            <person name="O'dell C.N."/>
            <person name="Okwuonu G."/>
            <person name="Palmer S."/>
            <person name="Pandian R."/>
            <person name="Parker D."/>
            <person name="Parrish J."/>
            <person name="Pasternak S."/>
            <person name="Patel D."/>
            <person name="Pearce A.V."/>
            <person name="Pearson D.M."/>
            <person name="Pelan S.E."/>
            <person name="Perez L."/>
            <person name="Porter K.M."/>
            <person name="Ramsey Y."/>
            <person name="Reichwald K."/>
            <person name="Rhodes S."/>
            <person name="Ridler K.A."/>
            <person name="Schlessinger D."/>
            <person name="Schueler M.G."/>
            <person name="Sehra H.K."/>
            <person name="Shaw-Smith C."/>
            <person name="Shen H."/>
            <person name="Sheridan E.M."/>
            <person name="Shownkeen R."/>
            <person name="Skuce C.D."/>
            <person name="Smith M.L."/>
            <person name="Sotheran E.C."/>
            <person name="Steingruber H.E."/>
            <person name="Steward C.A."/>
            <person name="Storey R."/>
            <person name="Swann R.M."/>
            <person name="Swarbreck D."/>
            <person name="Tabor P.E."/>
            <person name="Taudien S."/>
            <person name="Taylor T."/>
            <person name="Teague B."/>
            <person name="Thomas K."/>
            <person name="Thorpe A."/>
            <person name="Timms K."/>
            <person name="Tracey A."/>
            <person name="Trevanion S."/>
            <person name="Tromans A.C."/>
            <person name="d'Urso M."/>
            <person name="Verduzco D."/>
            <person name="Villasana D."/>
            <person name="Waldron L."/>
            <person name="Wall M."/>
            <person name="Wang Q."/>
            <person name="Warren J."/>
            <person name="Warry G.L."/>
            <person name="Wei X."/>
            <person name="West A."/>
            <person name="Whitehead S.L."/>
            <person name="Whiteley M.N."/>
            <person name="Wilkinson J.E."/>
            <person name="Willey D.L."/>
            <person name="Williams G."/>
            <person name="Williams L."/>
            <person name="Williamson A."/>
            <person name="Williamson H."/>
            <person name="Wilming L."/>
            <person name="Woodmansey R.L."/>
            <person name="Wray P.W."/>
            <person name="Yen J."/>
            <person name="Zhang J."/>
            <person name="Zhou J."/>
            <person name="Zoghbi H."/>
            <person name="Zorilla S."/>
            <person name="Buck D."/>
            <person name="Reinhardt R."/>
            <person name="Poustka A."/>
            <person name="Rosenthal A."/>
            <person name="Lehrach H."/>
            <person name="Meindl A."/>
            <person name="Minx P.J."/>
            <person name="Hillier L.W."/>
            <person name="Willard H.F."/>
            <person name="Wilson R.K."/>
            <person name="Waterston R.H."/>
            <person name="Rice C.M."/>
            <person name="Vaudin M."/>
            <person name="Coulson A."/>
            <person name="Nelson D.L."/>
            <person name="Weinstock G."/>
            <person name="Sulston J.E."/>
            <person name="Durbin R.M."/>
            <person name="Hubbard T."/>
            <person name="Gibbs R.A."/>
            <person name="Beck S."/>
            <person name="Rogers J."/>
            <person name="Bentley D.R."/>
        </authorList>
    </citation>
    <scope>NUCLEOTIDE SEQUENCE [LARGE SCALE GENOMIC DNA]</scope>
</reference>
<reference key="4">
    <citation type="journal article" date="2004" name="Genome Res.">
        <title>The status, quality, and expansion of the NIH full-length cDNA project: the Mammalian Gene Collection (MGC).</title>
        <authorList>
            <consortium name="The MGC Project Team"/>
        </authorList>
    </citation>
    <scope>NUCLEOTIDE SEQUENCE [LARGE SCALE MRNA] (ISOFORM 1)</scope>
    <source>
        <tissue>Placenta</tissue>
        <tissue>Skin</tissue>
    </source>
</reference>
<reference key="5">
    <citation type="journal article" date="2000" name="EMBO Rep.">
        <title>Systematic subcellular localization of novel proteins identified by large-scale cDNA sequencing.</title>
        <authorList>
            <person name="Simpson J.C."/>
            <person name="Wellenreuther R."/>
            <person name="Poustka A."/>
            <person name="Pepperkok R."/>
            <person name="Wiemann S."/>
        </authorList>
    </citation>
    <scope>SUBCELLULAR LOCATION</scope>
</reference>
<reference key="6">
    <citation type="journal article" date="2011" name="BMC Syst. Biol.">
        <title>Initial characterization of the human central proteome.</title>
        <authorList>
            <person name="Burkard T.R."/>
            <person name="Planyavsky M."/>
            <person name="Kaupe I."/>
            <person name="Breitwieser F.P."/>
            <person name="Buerckstuemmer T."/>
            <person name="Bennett K.L."/>
            <person name="Superti-Furga G."/>
            <person name="Colinge J."/>
        </authorList>
    </citation>
    <scope>IDENTIFICATION BY MASS SPECTROMETRY [LARGE SCALE ANALYSIS]</scope>
</reference>
<reference key="7">
    <citation type="journal article" date="2014" name="J. Proteomics">
        <title>An enzyme assisted RP-RPLC approach for in-depth analysis of human liver phosphoproteome.</title>
        <authorList>
            <person name="Bian Y."/>
            <person name="Song C."/>
            <person name="Cheng K."/>
            <person name="Dong M."/>
            <person name="Wang F."/>
            <person name="Huang J."/>
            <person name="Sun D."/>
            <person name="Wang L."/>
            <person name="Ye M."/>
            <person name="Zou H."/>
        </authorList>
    </citation>
    <scope>IDENTIFICATION BY MASS SPECTROMETRY [LARGE SCALE ANALYSIS]</scope>
    <source>
        <tissue>Liver</tissue>
    </source>
</reference>
<reference key="8">
    <citation type="journal article" date="2015" name="Proteomics">
        <title>N-terminome analysis of the human mitochondrial proteome.</title>
        <authorList>
            <person name="Vaca Jacome A.S."/>
            <person name="Rabilloud T."/>
            <person name="Schaeffer-Reiss C."/>
            <person name="Rompais M."/>
            <person name="Ayoub D."/>
            <person name="Lane L."/>
            <person name="Bairoch A."/>
            <person name="Van Dorsselaer A."/>
            <person name="Carapito C."/>
        </authorList>
    </citation>
    <scope>IDENTIFICATION BY MASS SPECTROMETRY [LARGE SCALE ANALYSIS]</scope>
</reference>
<reference key="9">
    <citation type="journal article" date="2017" name="Sci. Rep.">
        <title>The beta and gamma subunits play distinct functional roles in the alpha2betagamma heterotetramer of human NAD-dependent isocitrate dehydrogenase.</title>
        <authorList>
            <person name="Ma T."/>
            <person name="Peng Y."/>
            <person name="Huang W."/>
            <person name="Liu Y."/>
            <person name="Ding J."/>
        </authorList>
    </citation>
    <scope>FUNCTION</scope>
    <scope>SUBUNIT</scope>
    <scope>ACTIVITY REGULATION</scope>
    <scope>COFACTOR</scope>
    <scope>MUTAGENESIS OF LYS-190</scope>
</reference>
<reference key="10">
    <citation type="journal article" date="2017" name="Sci. Rep.">
        <title>Molecular mechanism of the allosteric regulation of the alphagamma heterodimer of human NAD-dependent isocitrate dehydrogenase.</title>
        <authorList>
            <person name="Ma T."/>
            <person name="Peng Y."/>
            <person name="Huang W."/>
            <person name="Ding J."/>
        </authorList>
    </citation>
    <scope>X-RAY CRYSTALLOGRAPHY (2.31 ANGSTROMS) OF 40-393 IN COMPLEX WITH MAGNESIUM AND CITRATE</scope>
    <scope>X-RAY CRYSTALLOGRAPHY (2.50 ANGSTROMS) OF 40-393 OF MUTANT ALA-190 IN COMPLEX WITH MAGNESIUM; ADP AND CITRATE</scope>
    <scope>SUBUNIT</scope>
    <scope>COFACTOR</scope>
    <scope>ACTIVITY REGULATION</scope>
    <scope>ALLOSTERIC ACTIVATION</scope>
    <scope>MUTAGENESIS OF ASN-117; THR-120; SER-130; ASN-133; ARG-136; ARG-167; GLU-173; TYR-174; LYS-190; ASP-229; TYR-276; ARG-311; ASN-312; THR-313; LYS-315 AND ASN-324</scope>
</reference>
<gene>
    <name type="primary">IDH3G</name>
</gene>
<dbReference type="EMBL" id="Z68907">
    <property type="protein sequence ID" value="CAA93143.1"/>
    <property type="molecule type" value="mRNA"/>
</dbReference>
<dbReference type="EMBL" id="Z68129">
    <property type="protein sequence ID" value="CAA92214.1"/>
    <property type="molecule type" value="Genomic_DNA"/>
</dbReference>
<dbReference type="EMBL" id="U52111">
    <property type="status" value="NOT_ANNOTATED_CDS"/>
    <property type="molecule type" value="Genomic_DNA"/>
</dbReference>
<dbReference type="EMBL" id="U40272">
    <property type="protein sequence ID" value="AAD09357.1"/>
    <property type="molecule type" value="mRNA"/>
</dbReference>
<dbReference type="EMBL" id="BC000933">
    <property type="protein sequence ID" value="AAH00933.1"/>
    <property type="molecule type" value="mRNA"/>
</dbReference>
<dbReference type="EMBL" id="BC001902">
    <property type="protein sequence ID" value="AAH01902.1"/>
    <property type="molecule type" value="mRNA"/>
</dbReference>
<dbReference type="CCDS" id="CCDS14730.1">
    <molecule id="P51553-1"/>
</dbReference>
<dbReference type="CCDS" id="CCDS44019.1">
    <molecule id="P51553-2"/>
</dbReference>
<dbReference type="RefSeq" id="NP_004126.1">
    <molecule id="P51553-1"/>
    <property type="nucleotide sequence ID" value="NM_004135.4"/>
</dbReference>
<dbReference type="RefSeq" id="NP_777358.1">
    <molecule id="P51553-2"/>
    <property type="nucleotide sequence ID" value="NM_174869.3"/>
</dbReference>
<dbReference type="PDB" id="5GRE">
    <property type="method" value="X-ray"/>
    <property type="resolution" value="2.65 A"/>
    <property type="chains" value="B=40-393"/>
</dbReference>
<dbReference type="PDB" id="5GRF">
    <property type="method" value="X-ray"/>
    <property type="resolution" value="2.50 A"/>
    <property type="chains" value="B=40-393"/>
</dbReference>
<dbReference type="PDB" id="5GRH">
    <property type="method" value="X-ray"/>
    <property type="resolution" value="2.80 A"/>
    <property type="chains" value="B=40-393"/>
</dbReference>
<dbReference type="PDB" id="5GRI">
    <property type="method" value="X-ray"/>
    <property type="resolution" value="2.31 A"/>
    <property type="chains" value="B=40-393"/>
</dbReference>
<dbReference type="PDB" id="5GRL">
    <property type="method" value="X-ray"/>
    <property type="resolution" value="2.79 A"/>
    <property type="chains" value="B=40-393"/>
</dbReference>
<dbReference type="PDB" id="5YVT">
    <property type="method" value="X-ray"/>
    <property type="resolution" value="2.40 A"/>
    <property type="chains" value="B=40-393"/>
</dbReference>
<dbReference type="PDB" id="6L57">
    <property type="method" value="X-ray"/>
    <property type="resolution" value="2.30 A"/>
    <property type="chains" value="B=40-393"/>
</dbReference>
<dbReference type="PDB" id="6L59">
    <property type="method" value="X-ray"/>
    <property type="resolution" value="2.25 A"/>
    <property type="chains" value="B=40-393"/>
</dbReference>
<dbReference type="PDB" id="7CE3">
    <property type="method" value="X-ray"/>
    <property type="resolution" value="3.47 A"/>
    <property type="chains" value="B=40-393"/>
</dbReference>
<dbReference type="PDB" id="8GRG">
    <property type="method" value="X-ray"/>
    <property type="resolution" value="2.70 A"/>
    <property type="chains" value="B=40-393"/>
</dbReference>
<dbReference type="PDB" id="8GRH">
    <property type="method" value="X-ray"/>
    <property type="resolution" value="2.51 A"/>
    <property type="chains" value="B=40-393"/>
</dbReference>
<dbReference type="PDB" id="8GS5">
    <property type="method" value="X-ray"/>
    <property type="resolution" value="4.49 A"/>
    <property type="chains" value="D/H/L/P=40-393"/>
</dbReference>
<dbReference type="PDBsum" id="5GRE"/>
<dbReference type="PDBsum" id="5GRF"/>
<dbReference type="PDBsum" id="5GRH"/>
<dbReference type="PDBsum" id="5GRI"/>
<dbReference type="PDBsum" id="5GRL"/>
<dbReference type="PDBsum" id="5YVT"/>
<dbReference type="PDBsum" id="6L57"/>
<dbReference type="PDBsum" id="6L59"/>
<dbReference type="PDBsum" id="7CE3"/>
<dbReference type="PDBsum" id="8GRG"/>
<dbReference type="PDBsum" id="8GRH"/>
<dbReference type="PDBsum" id="8GS5"/>
<dbReference type="SMR" id="P51553"/>
<dbReference type="BioGRID" id="109647">
    <property type="interactions" value="70"/>
</dbReference>
<dbReference type="ComplexPortal" id="CPX-553">
    <property type="entry name" value="Mitochondrial isocitrate dehydrogenase complex (NAD+)"/>
</dbReference>
<dbReference type="CORUM" id="P51553"/>
<dbReference type="FunCoup" id="P51553">
    <property type="interactions" value="1163"/>
</dbReference>
<dbReference type="IntAct" id="P51553">
    <property type="interactions" value="22"/>
</dbReference>
<dbReference type="MINT" id="P51553"/>
<dbReference type="STRING" id="9606.ENSP00000217901"/>
<dbReference type="DrugBank" id="DB13874">
    <property type="generic name" value="Enasidenib"/>
</dbReference>
<dbReference type="DrugBank" id="DB06757">
    <property type="generic name" value="Manganese cation"/>
</dbReference>
<dbReference type="DrugBank" id="DB00157">
    <property type="generic name" value="NADH"/>
</dbReference>
<dbReference type="DrugBank" id="DB17097">
    <property type="generic name" value="Vorasidenib"/>
</dbReference>
<dbReference type="GlyGen" id="P51553">
    <property type="glycosylation" value="1 site, 1 O-linked glycan (1 site)"/>
</dbReference>
<dbReference type="iPTMnet" id="P51553"/>
<dbReference type="PhosphoSitePlus" id="P51553"/>
<dbReference type="SwissPalm" id="P51553"/>
<dbReference type="BioMuta" id="IDH3G"/>
<dbReference type="DMDM" id="1708404"/>
<dbReference type="jPOST" id="P51553"/>
<dbReference type="MassIVE" id="P51553"/>
<dbReference type="PaxDb" id="9606-ENSP00000217901"/>
<dbReference type="PeptideAtlas" id="P51553"/>
<dbReference type="ProteomicsDB" id="19639"/>
<dbReference type="ProteomicsDB" id="56332">
    <molecule id="P51553-1"/>
</dbReference>
<dbReference type="Pumba" id="P51553"/>
<dbReference type="Antibodypedia" id="408">
    <property type="antibodies" value="258 antibodies from 31 providers"/>
</dbReference>
<dbReference type="DNASU" id="3421"/>
<dbReference type="Ensembl" id="ENST00000217901.10">
    <molecule id="P51553-1"/>
    <property type="protein sequence ID" value="ENSP00000217901.5"/>
    <property type="gene ID" value="ENSG00000067829.20"/>
</dbReference>
<dbReference type="Ensembl" id="ENST00000370092.7">
    <molecule id="P51553-2"/>
    <property type="protein sequence ID" value="ENSP00000359110.3"/>
    <property type="gene ID" value="ENSG00000067829.20"/>
</dbReference>
<dbReference type="GeneID" id="3421"/>
<dbReference type="KEGG" id="hsa:3421"/>
<dbReference type="MANE-Select" id="ENST00000217901.10">
    <property type="protein sequence ID" value="ENSP00000217901.5"/>
    <property type="RefSeq nucleotide sequence ID" value="NM_004135.4"/>
    <property type="RefSeq protein sequence ID" value="NP_004126.1"/>
</dbReference>
<dbReference type="UCSC" id="uc004fip.4">
    <molecule id="P51553-1"/>
    <property type="organism name" value="human"/>
</dbReference>
<dbReference type="AGR" id="HGNC:5386"/>
<dbReference type="CTD" id="3421"/>
<dbReference type="DisGeNET" id="3421"/>
<dbReference type="GeneCards" id="IDH3G"/>
<dbReference type="HGNC" id="HGNC:5386">
    <property type="gene designation" value="IDH3G"/>
</dbReference>
<dbReference type="HPA" id="ENSG00000067829">
    <property type="expression patterns" value="Low tissue specificity"/>
</dbReference>
<dbReference type="MalaCards" id="IDH3G"/>
<dbReference type="MIM" id="300089">
    <property type="type" value="gene"/>
</dbReference>
<dbReference type="neXtProt" id="NX_P51553"/>
<dbReference type="OpenTargets" id="ENSG00000067829"/>
<dbReference type="PharmGKB" id="PA29634"/>
<dbReference type="VEuPathDB" id="HostDB:ENSG00000067829"/>
<dbReference type="eggNOG" id="KOG0784">
    <property type="taxonomic scope" value="Eukaryota"/>
</dbReference>
<dbReference type="GeneTree" id="ENSGT00950000182989"/>
<dbReference type="InParanoid" id="P51553"/>
<dbReference type="OMA" id="PWSCDYY"/>
<dbReference type="OrthoDB" id="10261637at2759"/>
<dbReference type="PAN-GO" id="P51553">
    <property type="GO annotations" value="3 GO annotations based on evolutionary models"/>
</dbReference>
<dbReference type="PhylomeDB" id="P51553"/>
<dbReference type="TreeFam" id="TF315033"/>
<dbReference type="BioCyc" id="MetaCyc:ENSG00000067829-MONOMER"/>
<dbReference type="BRENDA" id="1.1.1.41">
    <property type="organism ID" value="2681"/>
</dbReference>
<dbReference type="PathwayCommons" id="P51553"/>
<dbReference type="Reactome" id="R-HSA-1268020">
    <property type="pathway name" value="Mitochondrial protein import"/>
</dbReference>
<dbReference type="Reactome" id="R-HSA-71403">
    <property type="pathway name" value="Citric acid cycle (TCA cycle)"/>
</dbReference>
<dbReference type="SABIO-RK" id="P51553"/>
<dbReference type="SignaLink" id="P51553"/>
<dbReference type="SIGNOR" id="P51553"/>
<dbReference type="BioGRID-ORCS" id="3421">
    <property type="hits" value="8 hits in 788 CRISPR screens"/>
</dbReference>
<dbReference type="CD-CODE" id="91857CE7">
    <property type="entry name" value="Nucleolus"/>
</dbReference>
<dbReference type="ChiTaRS" id="IDH3G">
    <property type="organism name" value="human"/>
</dbReference>
<dbReference type="GeneWiki" id="IDH3G"/>
<dbReference type="GenomeRNAi" id="3421"/>
<dbReference type="Pharos" id="P51553">
    <property type="development level" value="Tbio"/>
</dbReference>
<dbReference type="PRO" id="PR:P51553"/>
<dbReference type="Proteomes" id="UP000005640">
    <property type="component" value="Chromosome X"/>
</dbReference>
<dbReference type="RNAct" id="P51553">
    <property type="molecule type" value="protein"/>
</dbReference>
<dbReference type="Bgee" id="ENSG00000067829">
    <property type="expression patterns" value="Expressed in right hemisphere of cerebellum and 210 other cell types or tissues"/>
</dbReference>
<dbReference type="ExpressionAtlas" id="P51553">
    <property type="expression patterns" value="baseline and differential"/>
</dbReference>
<dbReference type="GO" id="GO:0045242">
    <property type="term" value="C:isocitrate dehydrogenase complex (NAD+)"/>
    <property type="evidence" value="ECO:0000314"/>
    <property type="project" value="FlyBase"/>
</dbReference>
<dbReference type="GO" id="GO:0005759">
    <property type="term" value="C:mitochondrial matrix"/>
    <property type="evidence" value="ECO:0000304"/>
    <property type="project" value="Reactome"/>
</dbReference>
<dbReference type="GO" id="GO:0005739">
    <property type="term" value="C:mitochondrion"/>
    <property type="evidence" value="ECO:0000314"/>
    <property type="project" value="LIFEdb"/>
</dbReference>
<dbReference type="GO" id="GO:0005730">
    <property type="term" value="C:nucleolus"/>
    <property type="evidence" value="ECO:0000314"/>
    <property type="project" value="HPA"/>
</dbReference>
<dbReference type="GO" id="GO:0005524">
    <property type="term" value="F:ATP binding"/>
    <property type="evidence" value="ECO:0007669"/>
    <property type="project" value="UniProtKB-KW"/>
</dbReference>
<dbReference type="GO" id="GO:0004449">
    <property type="term" value="F:isocitrate dehydrogenase (NAD+) activity"/>
    <property type="evidence" value="ECO:0000250"/>
    <property type="project" value="UniProtKB"/>
</dbReference>
<dbReference type="GO" id="GO:0000287">
    <property type="term" value="F:magnesium ion binding"/>
    <property type="evidence" value="ECO:0000314"/>
    <property type="project" value="UniProtKB"/>
</dbReference>
<dbReference type="GO" id="GO:0051287">
    <property type="term" value="F:NAD binding"/>
    <property type="evidence" value="ECO:0007669"/>
    <property type="project" value="InterPro"/>
</dbReference>
<dbReference type="GO" id="GO:0005975">
    <property type="term" value="P:carbohydrate metabolic process"/>
    <property type="evidence" value="ECO:0000303"/>
    <property type="project" value="ProtInc"/>
</dbReference>
<dbReference type="GO" id="GO:0006102">
    <property type="term" value="P:isocitrate metabolic process"/>
    <property type="evidence" value="ECO:0000250"/>
    <property type="project" value="UniProtKB"/>
</dbReference>
<dbReference type="GO" id="GO:0006099">
    <property type="term" value="P:tricarboxylic acid cycle"/>
    <property type="evidence" value="ECO:0000314"/>
    <property type="project" value="ComplexPortal"/>
</dbReference>
<dbReference type="FunFam" id="3.40.718.10:FF:000011">
    <property type="entry name" value="Isocitrate dehydrogenase [NAD] subunit, mitochondrial"/>
    <property type="match status" value="1"/>
</dbReference>
<dbReference type="Gene3D" id="3.40.718.10">
    <property type="entry name" value="Isopropylmalate Dehydrogenase"/>
    <property type="match status" value="1"/>
</dbReference>
<dbReference type="InterPro" id="IPR019818">
    <property type="entry name" value="IsoCit/isopropylmalate_DH_CS"/>
</dbReference>
<dbReference type="InterPro" id="IPR004434">
    <property type="entry name" value="Isocitrate_DH_NAD"/>
</dbReference>
<dbReference type="InterPro" id="IPR024084">
    <property type="entry name" value="IsoPropMal-DH-like_dom"/>
</dbReference>
<dbReference type="NCBIfam" id="TIGR00175">
    <property type="entry name" value="mito_nad_idh"/>
    <property type="match status" value="1"/>
</dbReference>
<dbReference type="PANTHER" id="PTHR11835">
    <property type="entry name" value="DECARBOXYLATING DEHYDROGENASES-ISOCITRATE, ISOPROPYLMALATE, TARTRATE"/>
    <property type="match status" value="1"/>
</dbReference>
<dbReference type="PANTHER" id="PTHR11835:SF78">
    <property type="entry name" value="ISOCITRATE DEHYDROGENASE [NAD] SUBUNIT GAMMA, MITOCHONDRIAL"/>
    <property type="match status" value="1"/>
</dbReference>
<dbReference type="Pfam" id="PF00180">
    <property type="entry name" value="Iso_dh"/>
    <property type="match status" value="1"/>
</dbReference>
<dbReference type="SMART" id="SM01329">
    <property type="entry name" value="Iso_dh"/>
    <property type="match status" value="1"/>
</dbReference>
<dbReference type="SUPFAM" id="SSF53659">
    <property type="entry name" value="Isocitrate/Isopropylmalate dehydrogenase-like"/>
    <property type="match status" value="1"/>
</dbReference>
<dbReference type="PROSITE" id="PS00470">
    <property type="entry name" value="IDH_IMDH"/>
    <property type="match status" value="1"/>
</dbReference>
<name>IDH3G_HUMAN</name>
<protein>
    <recommendedName>
        <fullName>Isocitrate dehydrogenase [NAD] subunit gamma, mitochondrial</fullName>
    </recommendedName>
    <alternativeName>
        <fullName>Isocitric dehydrogenase subunit gamma</fullName>
    </alternativeName>
    <alternativeName>
        <fullName>NAD(+)-specific ICDH subunit gamma</fullName>
    </alternativeName>
</protein>
<feature type="transit peptide" description="Mitochondrion" evidence="1">
    <location>
        <begin position="1"/>
        <end position="39"/>
    </location>
</feature>
<feature type="chain" id="PRO_0000014449" description="Isocitrate dehydrogenase [NAD] subunit gamma, mitochondrial">
    <location>
        <begin position="40"/>
        <end position="393"/>
    </location>
</feature>
<feature type="binding site" evidence="3">
    <location>
        <position position="120"/>
    </location>
    <ligand>
        <name>citrate</name>
        <dbReference type="ChEBI" id="CHEBI:16947"/>
        <note>allosteric activator</note>
    </ligand>
</feature>
<feature type="binding site" evidence="3">
    <location>
        <position position="133"/>
    </location>
    <ligand>
        <name>citrate</name>
        <dbReference type="ChEBI" id="CHEBI:16947"/>
        <note>allosteric activator</note>
    </ligand>
</feature>
<feature type="binding site" evidence="3">
    <location>
        <position position="136"/>
    </location>
    <ligand>
        <name>substrate</name>
    </ligand>
</feature>
<feature type="binding site" evidence="3">
    <location>
        <position position="167"/>
    </location>
    <ligand>
        <name>substrate</name>
    </ligand>
</feature>
<feature type="binding site" evidence="3">
    <location>
        <position position="254"/>
    </location>
    <ligand>
        <name>Mn(2+)</name>
        <dbReference type="ChEBI" id="CHEBI:29035"/>
        <note>ligand shared with catalytic subunit</note>
    </ligand>
</feature>
<feature type="binding site" evidence="3">
    <location>
        <position position="254"/>
    </location>
    <ligand>
        <name>substrate</name>
    </ligand>
</feature>
<feature type="binding site" evidence="3">
    <location>
        <position position="312"/>
    </location>
    <ligand>
        <name>ADP</name>
        <dbReference type="ChEBI" id="CHEBI:456216"/>
        <note>allosteric activator</note>
    </ligand>
</feature>
<feature type="binding site" evidence="3">
    <location>
        <position position="313"/>
    </location>
    <ligand>
        <name>ADP</name>
        <dbReference type="ChEBI" id="CHEBI:456216"/>
        <note>allosteric activator</note>
    </ligand>
</feature>
<feature type="binding site" evidence="3">
    <location>
        <position position="324"/>
    </location>
    <ligand>
        <name>ADP</name>
        <dbReference type="ChEBI" id="CHEBI:456216"/>
        <note>allosteric activator</note>
    </ligand>
</feature>
<feature type="splice variant" id="VSP_046771" description="In isoform 2." evidence="5">
    <original>MHTPDIGGQGTTSEAIQDVIRHIRVINGRAVEA</original>
    <variation>VRFPSHPTLLPRPVSPCSLL</variation>
    <location>
        <begin position="361"/>
        <end position="393"/>
    </location>
</feature>
<feature type="mutagenesis site" description="No effect on the activation of the heterodimer composed of IDH3A and IDH3G subunits by citrate." evidence="3">
    <original>N</original>
    <variation>A</variation>
    <location>
        <position position="117"/>
    </location>
</feature>
<feature type="mutagenesis site" description="Significantly impairs the activation of the heterodimer composed of IDH3A and IDH3G subunits by citrate." evidence="3">
    <original>T</original>
    <variation>A</variation>
    <location>
        <position position="120"/>
    </location>
</feature>
<feature type="mutagenesis site" description="No significant effect on the activation of the heterodimer composed of IDH3A and IDH3G subunits by citrate." evidence="3">
    <original>S</original>
    <variation>A</variation>
    <location>
        <position position="130"/>
    </location>
</feature>
<feature type="mutagenesis site" description="Significantly impairs the activation of the heterodimer composed of IDH3A and IDH3G subunits by citrate." evidence="3">
    <original>N</original>
    <variation>A</variation>
    <location>
        <position position="133"/>
    </location>
</feature>
<feature type="mutagenesis site" description="Significantly impairs the activation of the heterodimer composed of IDH3A and IDH3G subunits by citrate." evidence="3">
    <original>R</original>
    <variation>A</variation>
    <location>
        <position position="136"/>
    </location>
</feature>
<feature type="mutagenesis site" description="Significantly impairs the activation of the heterodimer composed of IDH3A and IDH3G subunits by citrate." evidence="3">
    <original>R</original>
    <variation>A</variation>
    <location>
        <position position="167"/>
    </location>
</feature>
<feature type="mutagenesis site" description="No effect on the activation of the heterodimer composed of IDH3A and IDH3G subunits by citrate and ADP." evidence="3">
    <original>E</original>
    <variation>A</variation>
    <location>
        <position position="173"/>
    </location>
</feature>
<feature type="mutagenesis site" description="Significantly impairs the activation of the heterodimer composed of IDH3A and IDH3G subunits by citrate." evidence="3">
    <original>Y</original>
    <variation>F</variation>
    <location>
        <position position="174"/>
    </location>
</feature>
<feature type="mutagenesis site" description="Complete loss of the activation of the heterotetramer and the heterodimer composed of IDH3A and IDH3G subunits by citrate and ADP." evidence="3 4">
    <original>K</original>
    <variation>A</variation>
    <location>
        <position position="190"/>
    </location>
</feature>
<feature type="mutagenesis site" description="Significantly impairs the activation of the heterodimer composed of IDH3A and IDH3G subunits by citrate and ADP." evidence="3">
    <original>D</original>
    <variation>A</variation>
    <location>
        <position position="229"/>
    </location>
</feature>
<feature type="mutagenesis site" description="Significantly impairs the activation of the heterodimer composed of IDH3A and IDH3G subunits by citrate and ADP." evidence="3">
    <original>Y</original>
    <variation>F</variation>
    <location>
        <position position="276"/>
    </location>
</feature>
<feature type="mutagenesis site" description="Significantly impairs the activation of the heterodimer composed of IDH3A and IDH3G subunits by citrate." evidence="3">
    <original>R</original>
    <variation>A</variation>
    <location>
        <position position="311"/>
    </location>
</feature>
<feature type="mutagenesis site" description="Significantly impairs the activation of the heterodimer composed of IDH3A and IDH3G subunits by ADP." evidence="3">
    <original>N</original>
    <variation>A</variation>
    <location>
        <position position="312"/>
    </location>
</feature>
<feature type="mutagenesis site" description="Significantly impairs the activation of the heterodimer composed of IDH3A and IDH3G subunits by ADP." evidence="3">
    <original>T</original>
    <variation>A</variation>
    <location>
        <position position="313"/>
    </location>
</feature>
<feature type="mutagenesis site" description="No significant effect on the activation of the heterodimer composed of IDH3A and IDH3G subunits by ADP." evidence="3">
    <original>K</original>
    <variation>A</variation>
    <location>
        <position position="315"/>
    </location>
</feature>
<feature type="mutagenesis site" description="Complete loss of the activation of the heterodimer composed of IDH3A and IDH3G subunits by ADP." evidence="3">
    <original>N</original>
    <variation>A</variation>
    <location>
        <position position="324"/>
    </location>
</feature>
<feature type="sequence conflict" description="In Ref. 4; AAH01902." evidence="5" ref="4">
    <original>F</original>
    <variation>L</variation>
    <location>
        <position position="267"/>
    </location>
</feature>
<feature type="strand" evidence="8">
    <location>
        <begin position="55"/>
        <end position="60"/>
    </location>
</feature>
<feature type="helix" evidence="8">
    <location>
        <begin position="66"/>
        <end position="79"/>
    </location>
</feature>
<feature type="strand" evidence="8">
    <location>
        <begin position="83"/>
        <end position="88"/>
    </location>
</feature>
<feature type="strand" evidence="8">
    <location>
        <begin position="95"/>
        <end position="97"/>
    </location>
</feature>
<feature type="helix" evidence="8">
    <location>
        <begin position="98"/>
        <end position="110"/>
    </location>
</feature>
<feature type="strand" evidence="8">
    <location>
        <begin position="111"/>
        <end position="115"/>
    </location>
</feature>
<feature type="helix" evidence="8">
    <location>
        <begin position="131"/>
        <end position="138"/>
    </location>
</feature>
<feature type="strand" evidence="8">
    <location>
        <begin position="143"/>
        <end position="149"/>
    </location>
</feature>
<feature type="strand" evidence="6">
    <location>
        <begin position="152"/>
        <end position="154"/>
    </location>
</feature>
<feature type="strand" evidence="8">
    <location>
        <begin position="162"/>
        <end position="168"/>
    </location>
</feature>
<feature type="strand" evidence="8">
    <location>
        <begin position="170"/>
        <end position="172"/>
    </location>
</feature>
<feature type="strand" evidence="8">
    <location>
        <begin position="178"/>
        <end position="182"/>
    </location>
</feature>
<feature type="strand" evidence="8">
    <location>
        <begin position="185"/>
        <end position="193"/>
    </location>
</feature>
<feature type="helix" evidence="8">
    <location>
        <begin position="194"/>
        <end position="210"/>
    </location>
</feature>
<feature type="strand" evidence="8">
    <location>
        <begin position="215"/>
        <end position="220"/>
    </location>
</feature>
<feature type="turn" evidence="8">
    <location>
        <begin position="222"/>
        <end position="224"/>
    </location>
</feature>
<feature type="helix" evidence="8">
    <location>
        <begin position="228"/>
        <end position="240"/>
    </location>
</feature>
<feature type="strand" evidence="8">
    <location>
        <begin position="246"/>
        <end position="252"/>
    </location>
</feature>
<feature type="helix" evidence="8">
    <location>
        <begin position="253"/>
        <end position="260"/>
    </location>
</feature>
<feature type="helix" evidence="8">
    <location>
        <begin position="264"/>
        <end position="266"/>
    </location>
</feature>
<feature type="strand" evidence="8">
    <location>
        <begin position="268"/>
        <end position="272"/>
    </location>
</feature>
<feature type="helix" evidence="8">
    <location>
        <begin position="274"/>
        <end position="288"/>
    </location>
</feature>
<feature type="turn" evidence="8">
    <location>
        <begin position="291"/>
        <end position="293"/>
    </location>
</feature>
<feature type="strand" evidence="8">
    <location>
        <begin position="295"/>
        <end position="299"/>
    </location>
</feature>
<feature type="strand" evidence="8">
    <location>
        <begin position="304"/>
        <end position="308"/>
    </location>
</feature>
<feature type="helix" evidence="8">
    <location>
        <begin position="315"/>
        <end position="317"/>
    </location>
</feature>
<feature type="turn" evidence="7">
    <location>
        <begin position="318"/>
        <end position="321"/>
    </location>
</feature>
<feature type="helix" evidence="8">
    <location>
        <begin position="326"/>
        <end position="338"/>
    </location>
</feature>
<feature type="helix" evidence="8">
    <location>
        <begin position="342"/>
        <end position="356"/>
    </location>
</feature>
<feature type="helix" evidence="8">
    <location>
        <begin position="359"/>
        <end position="361"/>
    </location>
</feature>
<feature type="helix" evidence="8">
    <location>
        <begin position="364"/>
        <end position="366"/>
    </location>
</feature>
<feature type="helix" evidence="8">
    <location>
        <begin position="372"/>
        <end position="382"/>
    </location>
</feature>
<feature type="turn" evidence="10">
    <location>
        <begin position="384"/>
        <end position="386"/>
    </location>
</feature>
<feature type="strand" evidence="9">
    <location>
        <begin position="389"/>
        <end position="391"/>
    </location>
</feature>
<accession>P51553</accession>
<accession>E9PDD5</accession>
<accession>Q9BUU5</accession>
<sequence length="393" mass="42794">MALKVATVAGSAAKAVLGPALLCRPWEVLGAHEVPSRNIFSEQTIPPSAKYGGRHTVTMIPGDGIGPELMLHVKSVFRHACVPVDFEEVHVSSNADEEDIRNAIMAIRRNRVALKGNIETNHNLPPSHKSRNNILRTSLDLYANVIHCKSLPGVVTRHKDIDILIVRENTEGEYSSLEHESVAGVVESLKIITKAKSLRIAEYAFKLAQESGRKKVTAVHKANIMKLGDGLFLQCCREVAARYPQITFENMIVDNTTMQLVSRPQQFDVMVMPNLYGNIVNNVCAGLVGGPGLVAGANYGHVYAVFETATRNTGKSIANKNIANPTATLLASCMMLDHLKLHSYATSIRKAVLASMDNENMHTPDIGGQGTTSEAIQDVIRHIRVINGRAVEA</sequence>